<evidence type="ECO:0000250" key="1">
    <source>
        <dbReference type="UniProtKB" id="O00442"/>
    </source>
</evidence>
<evidence type="ECO:0000250" key="2">
    <source>
        <dbReference type="UniProtKB" id="P46849"/>
    </source>
</evidence>
<evidence type="ECO:0000250" key="3">
    <source>
        <dbReference type="UniProtKB" id="Q9D7H3"/>
    </source>
</evidence>
<evidence type="ECO:0000305" key="4"/>
<name>RTCA_BOVIN</name>
<gene>
    <name type="primary">RTCA</name>
    <name type="synonym">RTCD1</name>
</gene>
<accession>Q2HJ88</accession>
<organism>
    <name type="scientific">Bos taurus</name>
    <name type="common">Bovine</name>
    <dbReference type="NCBI Taxonomy" id="9913"/>
    <lineage>
        <taxon>Eukaryota</taxon>
        <taxon>Metazoa</taxon>
        <taxon>Chordata</taxon>
        <taxon>Craniata</taxon>
        <taxon>Vertebrata</taxon>
        <taxon>Euteleostomi</taxon>
        <taxon>Mammalia</taxon>
        <taxon>Eutheria</taxon>
        <taxon>Laurasiatheria</taxon>
        <taxon>Artiodactyla</taxon>
        <taxon>Ruminantia</taxon>
        <taxon>Pecora</taxon>
        <taxon>Bovidae</taxon>
        <taxon>Bovinae</taxon>
        <taxon>Bos</taxon>
    </lineage>
</organism>
<reference key="1">
    <citation type="submission" date="2006-02" db="EMBL/GenBank/DDBJ databases">
        <authorList>
            <consortium name="NIH - Mammalian Gene Collection (MGC) project"/>
        </authorList>
    </citation>
    <scope>NUCLEOTIDE SEQUENCE [LARGE SCALE MRNA]</scope>
    <source>
        <strain>Hereford</strain>
        <tissue>Uterus</tissue>
    </source>
</reference>
<dbReference type="EC" id="6.5.1.4" evidence="1"/>
<dbReference type="EMBL" id="BC113251">
    <property type="protein sequence ID" value="AAI13252.1"/>
    <property type="molecule type" value="mRNA"/>
</dbReference>
<dbReference type="RefSeq" id="NP_001039520.1">
    <property type="nucleotide sequence ID" value="NM_001046055.1"/>
</dbReference>
<dbReference type="SMR" id="Q2HJ88"/>
<dbReference type="FunCoup" id="Q2HJ88">
    <property type="interactions" value="2565"/>
</dbReference>
<dbReference type="STRING" id="9913.ENSBTAP00000008293"/>
<dbReference type="PaxDb" id="9913-ENSBTAP00000008293"/>
<dbReference type="Ensembl" id="ENSBTAT00000008293.6">
    <property type="protein sequence ID" value="ENSBTAP00000008293.5"/>
    <property type="gene ID" value="ENSBTAG00000006321.7"/>
</dbReference>
<dbReference type="GeneID" id="510469"/>
<dbReference type="KEGG" id="bta:510469"/>
<dbReference type="CTD" id="8634"/>
<dbReference type="VEuPathDB" id="HostDB:ENSBTAG00000006321"/>
<dbReference type="VGNC" id="VGNC:34193">
    <property type="gene designation" value="RTCA"/>
</dbReference>
<dbReference type="eggNOG" id="KOG3980">
    <property type="taxonomic scope" value="Eukaryota"/>
</dbReference>
<dbReference type="GeneTree" id="ENSGT00530000063404"/>
<dbReference type="HOGENOM" id="CLU_027882_0_1_1"/>
<dbReference type="InParanoid" id="Q2HJ88"/>
<dbReference type="OMA" id="WSPPIDY"/>
<dbReference type="OrthoDB" id="25029at2759"/>
<dbReference type="TreeFam" id="TF300831"/>
<dbReference type="Proteomes" id="UP000009136">
    <property type="component" value="Chromosome 3"/>
</dbReference>
<dbReference type="Bgee" id="ENSBTAG00000006321">
    <property type="expression patterns" value="Expressed in semen and 106 other cell types or tissues"/>
</dbReference>
<dbReference type="GO" id="GO:0005654">
    <property type="term" value="C:nucleoplasm"/>
    <property type="evidence" value="ECO:0000250"/>
    <property type="project" value="UniProtKB"/>
</dbReference>
<dbReference type="GO" id="GO:0005634">
    <property type="term" value="C:nucleus"/>
    <property type="evidence" value="ECO:0000318"/>
    <property type="project" value="GO_Central"/>
</dbReference>
<dbReference type="GO" id="GO:0005524">
    <property type="term" value="F:ATP binding"/>
    <property type="evidence" value="ECO:0007669"/>
    <property type="project" value="UniProtKB-KW"/>
</dbReference>
<dbReference type="GO" id="GO:0003963">
    <property type="term" value="F:RNA-3'-phosphate cyclase activity"/>
    <property type="evidence" value="ECO:0000250"/>
    <property type="project" value="UniProtKB"/>
</dbReference>
<dbReference type="GO" id="GO:0006396">
    <property type="term" value="P:RNA processing"/>
    <property type="evidence" value="ECO:0007669"/>
    <property type="project" value="InterPro"/>
</dbReference>
<dbReference type="CDD" id="cd00874">
    <property type="entry name" value="RNA_Cyclase_Class_II"/>
    <property type="match status" value="1"/>
</dbReference>
<dbReference type="FunFam" id="3.30.360.20:FF:000002">
    <property type="entry name" value="RNA terminal phosphate cyclase-like 1"/>
    <property type="match status" value="1"/>
</dbReference>
<dbReference type="Gene3D" id="3.65.10.20">
    <property type="entry name" value="RNA 3'-terminal phosphate cyclase domain"/>
    <property type="match status" value="1"/>
</dbReference>
<dbReference type="Gene3D" id="3.30.360.20">
    <property type="entry name" value="RNA 3'-terminal phosphate cyclase, insert domain"/>
    <property type="match status" value="1"/>
</dbReference>
<dbReference type="HAMAP" id="MF_00200">
    <property type="entry name" value="RTC"/>
    <property type="match status" value="1"/>
</dbReference>
<dbReference type="InterPro" id="IPR013791">
    <property type="entry name" value="RNA3'-term_phos_cycl_insert"/>
</dbReference>
<dbReference type="InterPro" id="IPR023797">
    <property type="entry name" value="RNA3'_phos_cyclase_dom"/>
</dbReference>
<dbReference type="InterPro" id="IPR037136">
    <property type="entry name" value="RNA3'_phos_cyclase_dom_sf"/>
</dbReference>
<dbReference type="InterPro" id="IPR000228">
    <property type="entry name" value="RNA3'_term_phos_cyc"/>
</dbReference>
<dbReference type="InterPro" id="IPR017770">
    <property type="entry name" value="RNA3'_term_phos_cyc_type_1"/>
</dbReference>
<dbReference type="InterPro" id="IPR020719">
    <property type="entry name" value="RNA3'_term_phos_cycl-like_CS"/>
</dbReference>
<dbReference type="InterPro" id="IPR013792">
    <property type="entry name" value="RNA3'P_cycl/enolpyr_Trfase_a/b"/>
</dbReference>
<dbReference type="InterPro" id="IPR036553">
    <property type="entry name" value="RPTC_insert"/>
</dbReference>
<dbReference type="NCBIfam" id="TIGR03399">
    <property type="entry name" value="RNA_3prim_cycl"/>
    <property type="match status" value="1"/>
</dbReference>
<dbReference type="PANTHER" id="PTHR11096">
    <property type="entry name" value="RNA 3' TERMINAL PHOSPHATE CYCLASE"/>
    <property type="match status" value="1"/>
</dbReference>
<dbReference type="PANTHER" id="PTHR11096:SF0">
    <property type="entry name" value="RNA 3'-TERMINAL PHOSPHATE CYCLASE"/>
    <property type="match status" value="1"/>
</dbReference>
<dbReference type="Pfam" id="PF01137">
    <property type="entry name" value="RTC"/>
    <property type="match status" value="1"/>
</dbReference>
<dbReference type="Pfam" id="PF05189">
    <property type="entry name" value="RTC_insert"/>
    <property type="match status" value="1"/>
</dbReference>
<dbReference type="PIRSF" id="PIRSF005378">
    <property type="entry name" value="RNA3'_term_phos_cycl_euk"/>
    <property type="match status" value="1"/>
</dbReference>
<dbReference type="SUPFAM" id="SSF55205">
    <property type="entry name" value="EPT/RTPC-like"/>
    <property type="match status" value="2"/>
</dbReference>
<dbReference type="SUPFAM" id="SSF52913">
    <property type="entry name" value="RNA 3'-terminal phosphate cyclase, RPTC, insert domain"/>
    <property type="match status" value="1"/>
</dbReference>
<dbReference type="PROSITE" id="PS01287">
    <property type="entry name" value="RTC"/>
    <property type="match status" value="1"/>
</dbReference>
<comment type="function">
    <text evidence="1 3">Catalyzes the conversion of 3'-phosphate to a 2',3'-cyclic phosphodiester at the end of RNA (By similarity). The mechanism of action of the enzyme occurs in 3 steps: (A) adenylation of the enzyme by ATP; (B) transfer of adenylate to an RNA-N3'P to produce RNA-N3'PP5'A; (C) and attack of the adjacent 2'-hydroxyl on the 3'-phosphorus in the diester linkage to produce the cyclic end product (By similarity). Likely functions in some aspects of cellular RNA processing (By similarity). Function plays an important role in regulating axon regeneration by inhibiting central nervous system (CNS) axon regeneration following optic nerve injury (By similarity).</text>
</comment>
<comment type="catalytic activity">
    <reaction evidence="1">
        <text>a 3'-end 3'-phospho-ribonucleotide-RNA + ATP = a 3'-end 2',3'-cyclophospho-ribonucleotide-RNA + AMP + diphosphate</text>
        <dbReference type="Rhea" id="RHEA:23976"/>
        <dbReference type="Rhea" id="RHEA-COMP:10463"/>
        <dbReference type="Rhea" id="RHEA-COMP:10464"/>
        <dbReference type="ChEBI" id="CHEBI:30616"/>
        <dbReference type="ChEBI" id="CHEBI:33019"/>
        <dbReference type="ChEBI" id="CHEBI:83062"/>
        <dbReference type="ChEBI" id="CHEBI:83064"/>
        <dbReference type="ChEBI" id="CHEBI:456215"/>
        <dbReference type="EC" id="6.5.1.4"/>
    </reaction>
</comment>
<comment type="subcellular location">
    <subcellularLocation>
        <location evidence="1">Nucleus</location>
        <location evidence="1">Nucleoplasm</location>
    </subcellularLocation>
</comment>
<comment type="similarity">
    <text evidence="4">Belongs to the RNA 3'-terminal cyclase family. Type 1 subfamily.</text>
</comment>
<sequence>MAGPRVEVDGGIMEGGGQILRVSTALSCLLGLPLRVQKIRAGRSTPGLRPQHLSGLEMIRDLCDGQLEGAEIGSTEITFTPEKIKGGVHTADTKTAGSVCLLMQVSMPCVLFAACPSELRLKGGTNAEMAPQIDYTAMVFKPIVEKFGFTFNCDIKMRGYYPKGGGEVIVRMSPVKQLSPINLTDRGCVTKIYGRAFVAGVLPFKVAKDMAAAAVRCIRKEIRDLYVNIQPVQEPKDQAFGNGNGIIIIAETSTGCLFAGSSLGKRGVNADKVGIEAAEMLLANLRHGGAVDEYLQDQLIIFMALASGISRIKTGPVTLHTQTAIHFAEQLAKAKFTVKKSEDEEDASKDTYIIECQGIGMTNPNL</sequence>
<proteinExistence type="evidence at transcript level"/>
<keyword id="KW-0067">ATP-binding</keyword>
<keyword id="KW-0436">Ligase</keyword>
<keyword id="KW-0547">Nucleotide-binding</keyword>
<keyword id="KW-0539">Nucleus</keyword>
<keyword id="KW-1185">Reference proteome</keyword>
<protein>
    <recommendedName>
        <fullName>RNA 3'-terminal phosphate cyclase</fullName>
        <shortName>RNA cyclase</shortName>
        <shortName>RNA-3'-phosphate cyclase</shortName>
        <ecNumber evidence="1">6.5.1.4</ecNumber>
    </recommendedName>
    <alternativeName>
        <fullName>RNA terminal phosphate cyclase domain-containing protein 1</fullName>
    </alternativeName>
</protein>
<feature type="chain" id="PRO_0000288837" description="RNA 3'-terminal phosphate cyclase">
    <location>
        <begin position="1"/>
        <end position="366"/>
    </location>
</feature>
<feature type="active site" description="Tele-AMP-histidine intermediate" evidence="2">
    <location>
        <position position="320"/>
    </location>
</feature>
<feature type="binding site" evidence="2">
    <location>
        <position position="104"/>
    </location>
    <ligand>
        <name>ATP</name>
        <dbReference type="ChEBI" id="CHEBI:30616"/>
    </ligand>
</feature>
<feature type="binding site" evidence="2">
    <location>
        <position position="131"/>
    </location>
    <ligand>
        <name>ATP</name>
        <dbReference type="ChEBI" id="CHEBI:30616"/>
    </ligand>
</feature>
<feature type="binding site" evidence="2">
    <location>
        <position position="294"/>
    </location>
    <ligand>
        <name>ATP</name>
        <dbReference type="ChEBI" id="CHEBI:30616"/>
    </ligand>
</feature>
<feature type="binding site" evidence="2">
    <location>
        <position position="297"/>
    </location>
    <ligand>
        <name>ATP</name>
        <dbReference type="ChEBI" id="CHEBI:30616"/>
    </ligand>
</feature>
<feature type="binding site" evidence="2">
    <location>
        <position position="298"/>
    </location>
    <ligand>
        <name>ATP</name>
        <dbReference type="ChEBI" id="CHEBI:30616"/>
    </ligand>
</feature>
<feature type="binding site" evidence="2">
    <location>
        <position position="320"/>
    </location>
    <ligand>
        <name>ATP</name>
        <dbReference type="ChEBI" id="CHEBI:30616"/>
    </ligand>
</feature>